<evidence type="ECO:0000255" key="1">
    <source>
        <dbReference type="HAMAP-Rule" id="MF_01724"/>
    </source>
</evidence>
<reference key="1">
    <citation type="journal article" date="2004" name="Nucleic Acids Res.">
        <title>The genome sequence of Bacillus cereus ATCC 10987 reveals metabolic adaptations and a large plasmid related to Bacillus anthracis pXO1.</title>
        <authorList>
            <person name="Rasko D.A."/>
            <person name="Ravel J."/>
            <person name="Oekstad O.A."/>
            <person name="Helgason E."/>
            <person name="Cer R.Z."/>
            <person name="Jiang L."/>
            <person name="Shores K.A."/>
            <person name="Fouts D.E."/>
            <person name="Tourasse N.J."/>
            <person name="Angiuoli S.V."/>
            <person name="Kolonay J.F."/>
            <person name="Nelson W.C."/>
            <person name="Kolstoe A.-B."/>
            <person name="Fraser C.M."/>
            <person name="Read T.D."/>
        </authorList>
    </citation>
    <scope>NUCLEOTIDE SEQUENCE [LARGE SCALE GENOMIC DNA]</scope>
    <source>
        <strain>ATCC 10987 / NRS 248</strain>
    </source>
</reference>
<gene>
    <name evidence="1" type="primary">ssuB</name>
    <name type="ordered locus">BCE_2961</name>
</gene>
<sequence>MTVSIDGVSKYFSKQTRTVQVLENINFQLEKGDFVTVIGPSGCGKSTLLKIIAGLDGEFEGEIIIDGERITKPSKKQGFIFQEHRLFPWLTVEENIAADLSLKDKYVKDKVKEWVEIVRLDGFEKSYPKEISGGMSQRVAIARALLRDPNVLLLDEPFGALDAFTRSHLQEVLLNIWEQKKTTMIFVTHDIDEAIYLSNRIVIMSAKPGKIHKVIENNLPYPRSKTSESFQEIRKKVLQQFERGGLIQTSI</sequence>
<comment type="function">
    <text evidence="1">Part of the ABC transporter complex SsuABC involved in aliphatic sulfonates import. Responsible for energy coupling to the transport system.</text>
</comment>
<comment type="catalytic activity">
    <reaction evidence="1">
        <text>ATP + H2O + aliphatic sulfonate-[sulfonate-binding protein]Side 1 = ADP + phosphate + aliphatic sulfonateSide 2 + [sulfonate-binding protein]Side 1.</text>
        <dbReference type="EC" id="7.6.2.14"/>
    </reaction>
</comment>
<comment type="subunit">
    <text evidence="1">The complex is composed of two ATP-binding proteins (SsuB), two transmembrane proteins (SsuC) and a solute-binding protein (SsuA).</text>
</comment>
<comment type="subcellular location">
    <subcellularLocation>
        <location evidence="1">Cell membrane</location>
        <topology evidence="1">Peripheral membrane protein</topology>
    </subcellularLocation>
</comment>
<comment type="similarity">
    <text evidence="1">Belongs to the ABC transporter superfamily. Aliphatic sulfonates importer (TC 3.A.1.17.2) family.</text>
</comment>
<protein>
    <recommendedName>
        <fullName evidence="1">Aliphatic sulfonates import ATP-binding protein SsuB</fullName>
        <ecNumber evidence="1">7.6.2.14</ecNumber>
    </recommendedName>
</protein>
<keyword id="KW-0067">ATP-binding</keyword>
<keyword id="KW-1003">Cell membrane</keyword>
<keyword id="KW-0472">Membrane</keyword>
<keyword id="KW-0547">Nucleotide-binding</keyword>
<keyword id="KW-1278">Translocase</keyword>
<keyword id="KW-0813">Transport</keyword>
<accession>Q736E0</accession>
<name>SSUB_BACC1</name>
<feature type="chain" id="PRO_0000279885" description="Aliphatic sulfonates import ATP-binding protein SsuB">
    <location>
        <begin position="1"/>
        <end position="251"/>
    </location>
</feature>
<feature type="domain" description="ABC transporter" evidence="1">
    <location>
        <begin position="3"/>
        <end position="231"/>
    </location>
</feature>
<feature type="binding site" evidence="1">
    <location>
        <begin position="39"/>
        <end position="46"/>
    </location>
    <ligand>
        <name>ATP</name>
        <dbReference type="ChEBI" id="CHEBI:30616"/>
    </ligand>
</feature>
<organism>
    <name type="scientific">Bacillus cereus (strain ATCC 10987 / NRS 248)</name>
    <dbReference type="NCBI Taxonomy" id="222523"/>
    <lineage>
        <taxon>Bacteria</taxon>
        <taxon>Bacillati</taxon>
        <taxon>Bacillota</taxon>
        <taxon>Bacilli</taxon>
        <taxon>Bacillales</taxon>
        <taxon>Bacillaceae</taxon>
        <taxon>Bacillus</taxon>
        <taxon>Bacillus cereus group</taxon>
    </lineage>
</organism>
<proteinExistence type="inferred from homology"/>
<dbReference type="EC" id="7.6.2.14" evidence="1"/>
<dbReference type="EMBL" id="AE017194">
    <property type="protein sequence ID" value="AAS41872.1"/>
    <property type="molecule type" value="Genomic_DNA"/>
</dbReference>
<dbReference type="SMR" id="Q736E0"/>
<dbReference type="KEGG" id="bca:BCE_2961"/>
<dbReference type="HOGENOM" id="CLU_000604_1_22_9"/>
<dbReference type="Proteomes" id="UP000002527">
    <property type="component" value="Chromosome"/>
</dbReference>
<dbReference type="GO" id="GO:0005886">
    <property type="term" value="C:plasma membrane"/>
    <property type="evidence" value="ECO:0007669"/>
    <property type="project" value="UniProtKB-SubCell"/>
</dbReference>
<dbReference type="GO" id="GO:0005524">
    <property type="term" value="F:ATP binding"/>
    <property type="evidence" value="ECO:0007669"/>
    <property type="project" value="UniProtKB-KW"/>
</dbReference>
<dbReference type="GO" id="GO:0016887">
    <property type="term" value="F:ATP hydrolysis activity"/>
    <property type="evidence" value="ECO:0007669"/>
    <property type="project" value="InterPro"/>
</dbReference>
<dbReference type="CDD" id="cd03293">
    <property type="entry name" value="ABC_NrtD_SsuB_transporters"/>
    <property type="match status" value="1"/>
</dbReference>
<dbReference type="FunFam" id="3.40.50.300:FF:001273">
    <property type="entry name" value="Aliphatic sulfonates import ATP-binding protein SsuB"/>
    <property type="match status" value="1"/>
</dbReference>
<dbReference type="Gene3D" id="3.40.50.300">
    <property type="entry name" value="P-loop containing nucleotide triphosphate hydrolases"/>
    <property type="match status" value="1"/>
</dbReference>
<dbReference type="InterPro" id="IPR003593">
    <property type="entry name" value="AAA+_ATPase"/>
</dbReference>
<dbReference type="InterPro" id="IPR003439">
    <property type="entry name" value="ABC_transporter-like_ATP-bd"/>
</dbReference>
<dbReference type="InterPro" id="IPR017871">
    <property type="entry name" value="ABC_transporter-like_CS"/>
</dbReference>
<dbReference type="InterPro" id="IPR050166">
    <property type="entry name" value="ABC_transporter_ATP-bind"/>
</dbReference>
<dbReference type="InterPro" id="IPR027417">
    <property type="entry name" value="P-loop_NTPase"/>
</dbReference>
<dbReference type="PANTHER" id="PTHR42788:SF13">
    <property type="entry name" value="ALIPHATIC SULFONATES IMPORT ATP-BINDING PROTEIN SSUB"/>
    <property type="match status" value="1"/>
</dbReference>
<dbReference type="PANTHER" id="PTHR42788">
    <property type="entry name" value="TAURINE IMPORT ATP-BINDING PROTEIN-RELATED"/>
    <property type="match status" value="1"/>
</dbReference>
<dbReference type="Pfam" id="PF00005">
    <property type="entry name" value="ABC_tran"/>
    <property type="match status" value="1"/>
</dbReference>
<dbReference type="SMART" id="SM00382">
    <property type="entry name" value="AAA"/>
    <property type="match status" value="1"/>
</dbReference>
<dbReference type="SUPFAM" id="SSF52540">
    <property type="entry name" value="P-loop containing nucleoside triphosphate hydrolases"/>
    <property type="match status" value="1"/>
</dbReference>
<dbReference type="PROSITE" id="PS00211">
    <property type="entry name" value="ABC_TRANSPORTER_1"/>
    <property type="match status" value="1"/>
</dbReference>
<dbReference type="PROSITE" id="PS50893">
    <property type="entry name" value="ABC_TRANSPORTER_2"/>
    <property type="match status" value="1"/>
</dbReference>
<dbReference type="PROSITE" id="PS51291">
    <property type="entry name" value="SSUB"/>
    <property type="match status" value="1"/>
</dbReference>